<reference key="1">
    <citation type="journal article" date="2005" name="Jpn. Agric. Res. Q.">
        <title>Genome sequence of Xanthomonas oryzae pv. oryzae suggests contribution of large numbers of effector genes and insertion sequences to its race diversity.</title>
        <authorList>
            <person name="Ochiai H."/>
            <person name="Inoue Y."/>
            <person name="Takeya M."/>
            <person name="Sasaki A."/>
            <person name="Kaku H."/>
        </authorList>
    </citation>
    <scope>NUCLEOTIDE SEQUENCE [LARGE SCALE GENOMIC DNA]</scope>
    <source>
        <strain>MAFF 311018</strain>
    </source>
</reference>
<sequence>MIQMQSYLDVADNSGAKEVMCIKVLGGSKRRYARIGDIIKVTVKDAIPRGKVKKGEVYDAVVVRTRKGVRRADGSLIRFDGNAAVLLNNKQEPIGTRIFGPVTRELRSEKFMKIVSLAPEVL</sequence>
<protein>
    <recommendedName>
        <fullName evidence="1">Large ribosomal subunit protein uL14</fullName>
    </recommendedName>
    <alternativeName>
        <fullName evidence="2">50S ribosomal protein L14</fullName>
    </alternativeName>
</protein>
<organism>
    <name type="scientific">Xanthomonas oryzae pv. oryzae (strain MAFF 311018)</name>
    <dbReference type="NCBI Taxonomy" id="342109"/>
    <lineage>
        <taxon>Bacteria</taxon>
        <taxon>Pseudomonadati</taxon>
        <taxon>Pseudomonadota</taxon>
        <taxon>Gammaproteobacteria</taxon>
        <taxon>Lysobacterales</taxon>
        <taxon>Lysobacteraceae</taxon>
        <taxon>Xanthomonas</taxon>
    </lineage>
</organism>
<dbReference type="EMBL" id="AP008229">
    <property type="protein sequence ID" value="BAE70132.1"/>
    <property type="molecule type" value="Genomic_DNA"/>
</dbReference>
<dbReference type="RefSeq" id="WP_011260026.1">
    <property type="nucleotide sequence ID" value="NC_007705.1"/>
</dbReference>
<dbReference type="SMR" id="Q2NZZ5"/>
<dbReference type="GeneID" id="77338703"/>
<dbReference type="KEGG" id="xom:XOO3377"/>
<dbReference type="HOGENOM" id="CLU_095071_2_1_6"/>
<dbReference type="GO" id="GO:0022625">
    <property type="term" value="C:cytosolic large ribosomal subunit"/>
    <property type="evidence" value="ECO:0007669"/>
    <property type="project" value="TreeGrafter"/>
</dbReference>
<dbReference type="GO" id="GO:0070180">
    <property type="term" value="F:large ribosomal subunit rRNA binding"/>
    <property type="evidence" value="ECO:0007669"/>
    <property type="project" value="TreeGrafter"/>
</dbReference>
<dbReference type="GO" id="GO:0003735">
    <property type="term" value="F:structural constituent of ribosome"/>
    <property type="evidence" value="ECO:0007669"/>
    <property type="project" value="InterPro"/>
</dbReference>
<dbReference type="GO" id="GO:0006412">
    <property type="term" value="P:translation"/>
    <property type="evidence" value="ECO:0007669"/>
    <property type="project" value="UniProtKB-UniRule"/>
</dbReference>
<dbReference type="CDD" id="cd00337">
    <property type="entry name" value="Ribosomal_uL14"/>
    <property type="match status" value="1"/>
</dbReference>
<dbReference type="FunFam" id="2.40.150.20:FF:000001">
    <property type="entry name" value="50S ribosomal protein L14"/>
    <property type="match status" value="1"/>
</dbReference>
<dbReference type="Gene3D" id="2.40.150.20">
    <property type="entry name" value="Ribosomal protein L14"/>
    <property type="match status" value="1"/>
</dbReference>
<dbReference type="HAMAP" id="MF_01367">
    <property type="entry name" value="Ribosomal_uL14"/>
    <property type="match status" value="1"/>
</dbReference>
<dbReference type="InterPro" id="IPR000218">
    <property type="entry name" value="Ribosomal_uL14"/>
</dbReference>
<dbReference type="InterPro" id="IPR005745">
    <property type="entry name" value="Ribosomal_uL14_bac-type"/>
</dbReference>
<dbReference type="InterPro" id="IPR019972">
    <property type="entry name" value="Ribosomal_uL14_CS"/>
</dbReference>
<dbReference type="InterPro" id="IPR036853">
    <property type="entry name" value="Ribosomal_uL14_sf"/>
</dbReference>
<dbReference type="NCBIfam" id="TIGR01067">
    <property type="entry name" value="rplN_bact"/>
    <property type="match status" value="1"/>
</dbReference>
<dbReference type="PANTHER" id="PTHR11761">
    <property type="entry name" value="50S/60S RIBOSOMAL PROTEIN L14/L23"/>
    <property type="match status" value="1"/>
</dbReference>
<dbReference type="PANTHER" id="PTHR11761:SF3">
    <property type="entry name" value="LARGE RIBOSOMAL SUBUNIT PROTEIN UL14M"/>
    <property type="match status" value="1"/>
</dbReference>
<dbReference type="Pfam" id="PF00238">
    <property type="entry name" value="Ribosomal_L14"/>
    <property type="match status" value="1"/>
</dbReference>
<dbReference type="SMART" id="SM01374">
    <property type="entry name" value="Ribosomal_L14"/>
    <property type="match status" value="1"/>
</dbReference>
<dbReference type="SUPFAM" id="SSF50193">
    <property type="entry name" value="Ribosomal protein L14"/>
    <property type="match status" value="1"/>
</dbReference>
<dbReference type="PROSITE" id="PS00049">
    <property type="entry name" value="RIBOSOMAL_L14"/>
    <property type="match status" value="1"/>
</dbReference>
<proteinExistence type="inferred from homology"/>
<name>RL14_XANOM</name>
<feature type="chain" id="PRO_0000266588" description="Large ribosomal subunit protein uL14">
    <location>
        <begin position="1"/>
        <end position="122"/>
    </location>
</feature>
<gene>
    <name evidence="1" type="primary">rplN</name>
    <name type="ordered locus">XOO3377</name>
</gene>
<keyword id="KW-0687">Ribonucleoprotein</keyword>
<keyword id="KW-0689">Ribosomal protein</keyword>
<keyword id="KW-0694">RNA-binding</keyword>
<keyword id="KW-0699">rRNA-binding</keyword>
<evidence type="ECO:0000255" key="1">
    <source>
        <dbReference type="HAMAP-Rule" id="MF_01367"/>
    </source>
</evidence>
<evidence type="ECO:0000305" key="2"/>
<accession>Q2NZZ5</accession>
<comment type="function">
    <text evidence="1">Binds to 23S rRNA. Forms part of two intersubunit bridges in the 70S ribosome.</text>
</comment>
<comment type="subunit">
    <text evidence="1">Part of the 50S ribosomal subunit. Forms a cluster with proteins L3 and L19. In the 70S ribosome, L14 and L19 interact and together make contacts with the 16S rRNA in bridges B5 and B8.</text>
</comment>
<comment type="similarity">
    <text evidence="1">Belongs to the universal ribosomal protein uL14 family.</text>
</comment>